<organism>
    <name type="scientific">Drosophila melanogaster</name>
    <name type="common">Fruit fly</name>
    <dbReference type="NCBI Taxonomy" id="7227"/>
    <lineage>
        <taxon>Eukaryota</taxon>
        <taxon>Metazoa</taxon>
        <taxon>Ecdysozoa</taxon>
        <taxon>Arthropoda</taxon>
        <taxon>Hexapoda</taxon>
        <taxon>Insecta</taxon>
        <taxon>Pterygota</taxon>
        <taxon>Neoptera</taxon>
        <taxon>Endopterygota</taxon>
        <taxon>Diptera</taxon>
        <taxon>Brachycera</taxon>
        <taxon>Muscomorpha</taxon>
        <taxon>Ephydroidea</taxon>
        <taxon>Drosophilidae</taxon>
        <taxon>Drosophila</taxon>
        <taxon>Sophophora</taxon>
    </lineage>
</organism>
<comment type="function">
    <text evidence="5 8">Autoreceptor for octopamine, which is a neurotransmitter, neurohormone, and neuromodulator in invertebrates (PubMed:15816867, PubMed:22553037). Negatively regulates synaptic growth by activating the inhibitory G protein Galphao and limiting cAMP production (PubMed:22553037). Antagonizes the action of Octbeta2R which stimulates synaptic growth (PubMed:22553037).</text>
</comment>
<comment type="subcellular location">
    <subcellularLocation>
        <location evidence="10">Cell membrane</location>
        <topology evidence="10">Multi-pass membrane protein</topology>
    </subcellularLocation>
</comment>
<comment type="alternative products">
    <event type="alternative splicing"/>
    <isoform>
        <id>Q9VCZ3-1</id>
        <name evidence="6">A</name>
        <sequence type="displayed"/>
    </isoform>
    <isoform>
        <id>Q9VCZ3-2</id>
        <name evidence="6">B</name>
        <sequence type="described" ref="VSP_051833 VSP_051834"/>
    </isoform>
</comment>
<comment type="tissue specificity">
    <text evidence="7 8">In the adult, expressed in the superior protocerebrum and the optic lobe medulla of the central nervous system, nurse cells of egg chambers in the ovary at oogenic stages 1-10, and spermatogonia and spermatocytes in the testis (PubMed:22303848). Expressed in embryonic and larval ventral nerve cord and brain lobe, and the larval imaginal disk and larval salivary gland (PubMed:22303848). Also expressed in larval synaptic boutons and retinal cells in the optic disk (PubMed:22553037).</text>
</comment>
<comment type="developmental stage">
    <text evidence="5 7">Expressed in adult, pupae, third instar larvae, and 0-4 hour and 0-18 hour old embryos (PubMed:15816867, PubMed:22303848). Levels increase significantly at the late embryonic stage, gradually decrease during postembryonic development and increase slightly in the adult (PubMed:22303848).</text>
</comment>
<comment type="disruption phenotype">
    <text evidence="8">Fails to respond to starvation by increasing locomotor activity. Decreased basal levels of locomotion. Overgrowth of octopaminergic and glutamatergic (type I and type II) neuromuscular junctions. Increase in the number of terminal type I and type II boutons and in the motile filopodia-like extensions (synaptopods) which form during the expansion of type II terminals in developing larvae.</text>
</comment>
<comment type="similarity">
    <text evidence="2">Belongs to the G-protein coupled receptor 1 family.</text>
</comment>
<proteinExistence type="evidence at transcript level"/>
<sequence>MTLLQRLQAMSATTTRTILEGSISSFGGGTNEPLASKIPVLEESASHARYLKFIADGLIDEGLGSAVGSGSSIAVSVEDVVAGQAQDIQASEGSTDDADGSSHLALVFVKCFIIGFIILAAILGNMLVIVSVMRHRKLRIITNYFVVSLAVADMLVALCAMTFNASVMISGKWMFGSVMCDMWNSFDVYFSTASIMHLCCISVDRYYAIVQPLDYPLIMTQRRVFIMLLMVWLSPALLSFLPICSGWYTTTENYKYLKSNPHICEFKVNKAYAIVSSSMSFWIPGIVMLSMYYRIYQEADRQERLVYRSKVAALLLEKHLQISQIPKPRPSIQVEQSTISTMRRERKAARTLGIIMSAFLICWLPFFLWYIVSSLCDSCITPRLLVGILFWIGYFNSALNPIIYAYFNRDFRAAFKKTLKSLFPYAFYFCRRGRGRDDDRDLEFGGPSRRGTNGAQRTGSGSAEMANCVNSTASSEIHMSVMRARQYAVNVTPTTDAQMQQLHPLYTN</sequence>
<gene>
    <name evidence="14" type="primary">Octbeta1R</name>
    <name evidence="14" type="synonym">oa2</name>
    <name type="synonym">Oct-beta-1</name>
    <name evidence="14" type="ORF">CG6919</name>
</gene>
<name>OCTB1_DROME</name>
<accession>Q9VCZ3</accession>
<accession>A0A0B4KHN2</accession>
<accession>Q2PDQ3</accession>
<accession>Q4LBC0</accession>
<feature type="chain" id="PRO_0000069959" description="Octopamine receptor beta-1R">
    <location>
        <begin position="1"/>
        <end position="508"/>
    </location>
</feature>
<feature type="topological domain" description="Extracellular" evidence="1">
    <location>
        <begin position="1"/>
        <end position="111"/>
    </location>
</feature>
<feature type="transmembrane region" description="Helical; Name=1" evidence="1">
    <location>
        <begin position="112"/>
        <end position="132"/>
    </location>
</feature>
<feature type="topological domain" description="Cytoplasmic" evidence="1">
    <location>
        <begin position="133"/>
        <end position="139"/>
    </location>
</feature>
<feature type="transmembrane region" description="Helical; Name=2" evidence="1">
    <location>
        <begin position="140"/>
        <end position="160"/>
    </location>
</feature>
<feature type="topological domain" description="Extracellular" evidence="1">
    <location>
        <begin position="161"/>
        <end position="186"/>
    </location>
</feature>
<feature type="transmembrane region" description="Helical; Name=3" evidence="1">
    <location>
        <begin position="187"/>
        <end position="209"/>
    </location>
</feature>
<feature type="topological domain" description="Cytoplasmic" evidence="1">
    <location>
        <begin position="210"/>
        <end position="223"/>
    </location>
</feature>
<feature type="transmembrane region" description="Helical; Name=4" evidence="1">
    <location>
        <begin position="224"/>
        <end position="244"/>
    </location>
</feature>
<feature type="topological domain" description="Extracellular" evidence="1">
    <location>
        <begin position="245"/>
        <end position="270"/>
    </location>
</feature>
<feature type="transmembrane region" description="Helical; Name=5" evidence="1">
    <location>
        <begin position="271"/>
        <end position="291"/>
    </location>
</feature>
<feature type="topological domain" description="Cytoplasmic" evidence="1">
    <location>
        <begin position="292"/>
        <end position="351"/>
    </location>
</feature>
<feature type="transmembrane region" description="Helical; Name=6" evidence="1">
    <location>
        <begin position="352"/>
        <end position="372"/>
    </location>
</feature>
<feature type="topological domain" description="Extracellular" evidence="1">
    <location>
        <begin position="373"/>
        <end position="383"/>
    </location>
</feature>
<feature type="transmembrane region" description="Helical; Name=7" evidence="1">
    <location>
        <begin position="384"/>
        <end position="404"/>
    </location>
</feature>
<feature type="topological domain" description="Cytoplasmic" evidence="1">
    <location>
        <begin position="405"/>
        <end position="508"/>
    </location>
</feature>
<feature type="region of interest" description="Disordered" evidence="3">
    <location>
        <begin position="440"/>
        <end position="464"/>
    </location>
</feature>
<feature type="compositionally biased region" description="Polar residues" evidence="3">
    <location>
        <begin position="450"/>
        <end position="461"/>
    </location>
</feature>
<feature type="glycosylation site" description="N-linked (GlcNAc...) asparagine" evidence="1">
    <location>
        <position position="164"/>
    </location>
</feature>
<feature type="splice variant" id="VSP_051833" description="In isoform B." evidence="9">
    <original>S</original>
    <variation>T</variation>
    <location>
        <position position="421"/>
    </location>
</feature>
<feature type="splice variant" id="VSP_051834" description="In isoform B." evidence="9">
    <location>
        <begin position="422"/>
        <end position="508"/>
    </location>
</feature>
<reference evidence="10 12" key="1">
    <citation type="journal article" date="2005" name="J. Neurochem.">
        <title>A family of octopamine receptors that specifically induce cyclic AMP production or Ca2+ release in Drosophila melanogaster.</title>
        <authorList>
            <person name="Balfanz S."/>
            <person name="Struenker T."/>
            <person name="Frings S."/>
            <person name="Baumann A."/>
        </authorList>
    </citation>
    <scope>NUCLEOTIDE SEQUENCE [MRNA] (ISOFORM A)</scope>
    <scope>FUNCTION</scope>
    <scope>DEVELOPMENTAL STAGE</scope>
</reference>
<reference key="2">
    <citation type="journal article" date="2005" name="J. Neurochem.">
        <authorList>
            <person name="Balfanz S."/>
            <person name="Struenker T."/>
            <person name="Frings S."/>
            <person name="Baumann A."/>
        </authorList>
    </citation>
    <scope>ERRATUM OF PUBMED:15816867</scope>
</reference>
<reference evidence="10 13" key="3">
    <citation type="journal article" date="2005" name="J. Neurochem.">
        <title>Identification and characterization of a novel family of Drosophila beta-adrenergic-like octopamine G-protein coupled receptors.</title>
        <authorList>
            <person name="Maqueira B."/>
            <person name="Chatwin H."/>
            <person name="Evans P.D."/>
        </authorList>
    </citation>
    <scope>NUCLEOTIDE SEQUENCE [MRNA] (ISOFORMS A AND B)</scope>
    <source>
        <tissue evidence="13">Head</tissue>
    </source>
</reference>
<reference evidence="11" key="4">
    <citation type="journal article" date="2000" name="Science">
        <title>The genome sequence of Drosophila melanogaster.</title>
        <authorList>
            <person name="Adams M.D."/>
            <person name="Celniker S.E."/>
            <person name="Holt R.A."/>
            <person name="Evans C.A."/>
            <person name="Gocayne J.D."/>
            <person name="Amanatides P.G."/>
            <person name="Scherer S.E."/>
            <person name="Li P.W."/>
            <person name="Hoskins R.A."/>
            <person name="Galle R.F."/>
            <person name="George R.A."/>
            <person name="Lewis S.E."/>
            <person name="Richards S."/>
            <person name="Ashburner M."/>
            <person name="Henderson S.N."/>
            <person name="Sutton G.G."/>
            <person name="Wortman J.R."/>
            <person name="Yandell M.D."/>
            <person name="Zhang Q."/>
            <person name="Chen L.X."/>
            <person name="Brandon R.C."/>
            <person name="Rogers Y.-H.C."/>
            <person name="Blazej R.G."/>
            <person name="Champe M."/>
            <person name="Pfeiffer B.D."/>
            <person name="Wan K.H."/>
            <person name="Doyle C."/>
            <person name="Baxter E.G."/>
            <person name="Helt G."/>
            <person name="Nelson C.R."/>
            <person name="Miklos G.L.G."/>
            <person name="Abril J.F."/>
            <person name="Agbayani A."/>
            <person name="An H.-J."/>
            <person name="Andrews-Pfannkoch C."/>
            <person name="Baldwin D."/>
            <person name="Ballew R.M."/>
            <person name="Basu A."/>
            <person name="Baxendale J."/>
            <person name="Bayraktaroglu L."/>
            <person name="Beasley E.M."/>
            <person name="Beeson K.Y."/>
            <person name="Benos P.V."/>
            <person name="Berman B.P."/>
            <person name="Bhandari D."/>
            <person name="Bolshakov S."/>
            <person name="Borkova D."/>
            <person name="Botchan M.R."/>
            <person name="Bouck J."/>
            <person name="Brokstein P."/>
            <person name="Brottier P."/>
            <person name="Burtis K.C."/>
            <person name="Busam D.A."/>
            <person name="Butler H."/>
            <person name="Cadieu E."/>
            <person name="Center A."/>
            <person name="Chandra I."/>
            <person name="Cherry J.M."/>
            <person name="Cawley S."/>
            <person name="Dahlke C."/>
            <person name="Davenport L.B."/>
            <person name="Davies P."/>
            <person name="de Pablos B."/>
            <person name="Delcher A."/>
            <person name="Deng Z."/>
            <person name="Mays A.D."/>
            <person name="Dew I."/>
            <person name="Dietz S.M."/>
            <person name="Dodson K."/>
            <person name="Doup L.E."/>
            <person name="Downes M."/>
            <person name="Dugan-Rocha S."/>
            <person name="Dunkov B.C."/>
            <person name="Dunn P."/>
            <person name="Durbin K.J."/>
            <person name="Evangelista C.C."/>
            <person name="Ferraz C."/>
            <person name="Ferriera S."/>
            <person name="Fleischmann W."/>
            <person name="Fosler C."/>
            <person name="Gabrielian A.E."/>
            <person name="Garg N.S."/>
            <person name="Gelbart W.M."/>
            <person name="Glasser K."/>
            <person name="Glodek A."/>
            <person name="Gong F."/>
            <person name="Gorrell J.H."/>
            <person name="Gu Z."/>
            <person name="Guan P."/>
            <person name="Harris M."/>
            <person name="Harris N.L."/>
            <person name="Harvey D.A."/>
            <person name="Heiman T.J."/>
            <person name="Hernandez J.R."/>
            <person name="Houck J."/>
            <person name="Hostin D."/>
            <person name="Houston K.A."/>
            <person name="Howland T.J."/>
            <person name="Wei M.-H."/>
            <person name="Ibegwam C."/>
            <person name="Jalali M."/>
            <person name="Kalush F."/>
            <person name="Karpen G.H."/>
            <person name="Ke Z."/>
            <person name="Kennison J.A."/>
            <person name="Ketchum K.A."/>
            <person name="Kimmel B.E."/>
            <person name="Kodira C.D."/>
            <person name="Kraft C.L."/>
            <person name="Kravitz S."/>
            <person name="Kulp D."/>
            <person name="Lai Z."/>
            <person name="Lasko P."/>
            <person name="Lei Y."/>
            <person name="Levitsky A.A."/>
            <person name="Li J.H."/>
            <person name="Li Z."/>
            <person name="Liang Y."/>
            <person name="Lin X."/>
            <person name="Liu X."/>
            <person name="Mattei B."/>
            <person name="McIntosh T.C."/>
            <person name="McLeod M.P."/>
            <person name="McPherson D."/>
            <person name="Merkulov G."/>
            <person name="Milshina N.V."/>
            <person name="Mobarry C."/>
            <person name="Morris J."/>
            <person name="Moshrefi A."/>
            <person name="Mount S.M."/>
            <person name="Moy M."/>
            <person name="Murphy B."/>
            <person name="Murphy L."/>
            <person name="Muzny D.M."/>
            <person name="Nelson D.L."/>
            <person name="Nelson D.R."/>
            <person name="Nelson K.A."/>
            <person name="Nixon K."/>
            <person name="Nusskern D.R."/>
            <person name="Pacleb J.M."/>
            <person name="Palazzolo M."/>
            <person name="Pittman G.S."/>
            <person name="Pan S."/>
            <person name="Pollard J."/>
            <person name="Puri V."/>
            <person name="Reese M.G."/>
            <person name="Reinert K."/>
            <person name="Remington K."/>
            <person name="Saunders R.D.C."/>
            <person name="Scheeler F."/>
            <person name="Shen H."/>
            <person name="Shue B.C."/>
            <person name="Siden-Kiamos I."/>
            <person name="Simpson M."/>
            <person name="Skupski M.P."/>
            <person name="Smith T.J."/>
            <person name="Spier E."/>
            <person name="Spradling A.C."/>
            <person name="Stapleton M."/>
            <person name="Strong R."/>
            <person name="Sun E."/>
            <person name="Svirskas R."/>
            <person name="Tector C."/>
            <person name="Turner R."/>
            <person name="Venter E."/>
            <person name="Wang A.H."/>
            <person name="Wang X."/>
            <person name="Wang Z.-Y."/>
            <person name="Wassarman D.A."/>
            <person name="Weinstock G.M."/>
            <person name="Weissenbach J."/>
            <person name="Williams S.M."/>
            <person name="Woodage T."/>
            <person name="Worley K.C."/>
            <person name="Wu D."/>
            <person name="Yang S."/>
            <person name="Yao Q.A."/>
            <person name="Ye J."/>
            <person name="Yeh R.-F."/>
            <person name="Zaveri J.S."/>
            <person name="Zhan M."/>
            <person name="Zhang G."/>
            <person name="Zhao Q."/>
            <person name="Zheng L."/>
            <person name="Zheng X.H."/>
            <person name="Zhong F.N."/>
            <person name="Zhong W."/>
            <person name="Zhou X."/>
            <person name="Zhu S.C."/>
            <person name="Zhu X."/>
            <person name="Smith H.O."/>
            <person name="Gibbs R.A."/>
            <person name="Myers E.W."/>
            <person name="Rubin G.M."/>
            <person name="Venter J.C."/>
        </authorList>
    </citation>
    <scope>NUCLEOTIDE SEQUENCE [LARGE SCALE GENOMIC DNA]</scope>
    <source>
        <strain evidence="4">Berkeley</strain>
    </source>
</reference>
<reference evidence="10 11" key="5">
    <citation type="journal article" date="2002" name="Genome Biol.">
        <title>Annotation of the Drosophila melanogaster euchromatic genome: a systematic review.</title>
        <authorList>
            <person name="Misra S."/>
            <person name="Crosby M.A."/>
            <person name="Mungall C.J."/>
            <person name="Matthews B.B."/>
            <person name="Campbell K.S."/>
            <person name="Hradecky P."/>
            <person name="Huang Y."/>
            <person name="Kaminker J.S."/>
            <person name="Millburn G.H."/>
            <person name="Prochnik S.E."/>
            <person name="Smith C.D."/>
            <person name="Tupy J.L."/>
            <person name="Whitfield E.J."/>
            <person name="Bayraktaroglu L."/>
            <person name="Berman B.P."/>
            <person name="Bettencourt B.R."/>
            <person name="Celniker S.E."/>
            <person name="de Grey A.D.N.J."/>
            <person name="Drysdale R.A."/>
            <person name="Harris N.L."/>
            <person name="Richter J."/>
            <person name="Russo S."/>
            <person name="Schroeder A.J."/>
            <person name="Shu S.Q."/>
            <person name="Stapleton M."/>
            <person name="Yamada C."/>
            <person name="Ashburner M."/>
            <person name="Gelbart W.M."/>
            <person name="Rubin G.M."/>
            <person name="Lewis S.E."/>
        </authorList>
    </citation>
    <scope>GENOME REANNOTATION</scope>
    <scope>ALTERNATIVE SPLICING</scope>
    <source>
        <strain>Berkeley</strain>
    </source>
</reference>
<reference key="6">
    <citation type="journal article" date="2012" name="J. Neurosci.">
        <title>Inhibitory control of synaptic and behavioral plasticity by octopaminergic signaling.</title>
        <authorList>
            <person name="Koon A.C."/>
            <person name="Budnik V."/>
        </authorList>
    </citation>
    <scope>FUNCTION</scope>
    <scope>TISSUE SPECIFICITY</scope>
    <scope>DISRUPTION PHENOTYPE</scope>
</reference>
<reference key="7">
    <citation type="journal article" date="2012" name="Zool. Sci.">
        <title>Expression of beta-adrenergic-like octopamine receptors during Drosophila development.</title>
        <authorList>
            <person name="Ohhara Y."/>
            <person name="Kayashima Y."/>
            <person name="Hayashi Y."/>
            <person name="Kobayashi S."/>
            <person name="Yamakawa-Kobayashi K."/>
        </authorList>
    </citation>
    <scope>TISSUE SPECIFICITY</scope>
    <scope>DEVELOPMENTAL STAGE</scope>
</reference>
<dbReference type="EMBL" id="AJ617526">
    <property type="protein sequence ID" value="CAE84925.1"/>
    <property type="molecule type" value="mRNA"/>
</dbReference>
<dbReference type="EMBL" id="AJ880687">
    <property type="protein sequence ID" value="CAI56428.1"/>
    <property type="molecule type" value="mRNA"/>
</dbReference>
<dbReference type="EMBL" id="AJ880688">
    <property type="protein sequence ID" value="CAI56429.1"/>
    <property type="molecule type" value="mRNA"/>
</dbReference>
<dbReference type="EMBL" id="AE014297">
    <property type="protein sequence ID" value="AAF56012.1"/>
    <property type="molecule type" value="Genomic_DNA"/>
</dbReference>
<dbReference type="EMBL" id="AE014297">
    <property type="protein sequence ID" value="ABC66185.1"/>
    <property type="molecule type" value="Genomic_DNA"/>
</dbReference>
<dbReference type="EMBL" id="AE014297">
    <property type="protein sequence ID" value="AGB96223.1"/>
    <property type="molecule type" value="Genomic_DNA"/>
</dbReference>
<dbReference type="RefSeq" id="NP_001034064.1">
    <molecule id="Q9VCZ3-2"/>
    <property type="nucleotide sequence ID" value="NM_001038975.3"/>
</dbReference>
<dbReference type="RefSeq" id="NP_001262843.1">
    <molecule id="Q9VCZ3-1"/>
    <property type="nucleotide sequence ID" value="NM_001275914.1"/>
</dbReference>
<dbReference type="RefSeq" id="NP_651057.1">
    <molecule id="Q9VCZ3-1"/>
    <property type="nucleotide sequence ID" value="NM_142800.3"/>
</dbReference>
<dbReference type="SMR" id="Q9VCZ3"/>
<dbReference type="BioGRID" id="67607">
    <property type="interactions" value="1"/>
</dbReference>
<dbReference type="FunCoup" id="Q9VCZ3">
    <property type="interactions" value="177"/>
</dbReference>
<dbReference type="STRING" id="7227.FBpp0304263"/>
<dbReference type="GlyCosmos" id="Q9VCZ3">
    <property type="glycosylation" value="1 site, No reported glycans"/>
</dbReference>
<dbReference type="GlyGen" id="Q9VCZ3">
    <property type="glycosylation" value="2 sites"/>
</dbReference>
<dbReference type="PaxDb" id="7227-FBpp0304263"/>
<dbReference type="DNASU" id="42652"/>
<dbReference type="EnsemblMetazoa" id="FBtr0084260">
    <molecule id="Q9VCZ3-1"/>
    <property type="protein sequence ID" value="FBpp0083653"/>
    <property type="gene ID" value="FBgn0038980"/>
</dbReference>
<dbReference type="EnsemblMetazoa" id="FBtr0100322">
    <molecule id="Q9VCZ3-2"/>
    <property type="protein sequence ID" value="FBpp0099727"/>
    <property type="gene ID" value="FBgn0038980"/>
</dbReference>
<dbReference type="EnsemblMetazoa" id="FBtr0331930">
    <molecule id="Q9VCZ3-1"/>
    <property type="protein sequence ID" value="FBpp0304263"/>
    <property type="gene ID" value="FBgn0038980"/>
</dbReference>
<dbReference type="GeneID" id="42652"/>
<dbReference type="KEGG" id="dme:Dmel_CG6919"/>
<dbReference type="AGR" id="FB:FBgn0038980"/>
<dbReference type="CTD" id="42652"/>
<dbReference type="FlyBase" id="FBgn0038980">
    <property type="gene designation" value="Octbeta1R"/>
</dbReference>
<dbReference type="VEuPathDB" id="VectorBase:FBgn0038980"/>
<dbReference type="eggNOG" id="KOG3656">
    <property type="taxonomic scope" value="Eukaryota"/>
</dbReference>
<dbReference type="GeneTree" id="ENSGT00940000171582"/>
<dbReference type="InParanoid" id="Q9VCZ3"/>
<dbReference type="OMA" id="CCPYAFI"/>
<dbReference type="OrthoDB" id="5957871at2759"/>
<dbReference type="PhylomeDB" id="Q9VCZ3"/>
<dbReference type="Reactome" id="R-DME-390651">
    <property type="pathway name" value="Dopamine receptors"/>
</dbReference>
<dbReference type="Reactome" id="R-DME-390696">
    <property type="pathway name" value="Adrenoceptors"/>
</dbReference>
<dbReference type="Reactome" id="R-DME-418555">
    <property type="pathway name" value="G alpha (s) signalling events"/>
</dbReference>
<dbReference type="Reactome" id="R-DME-5689880">
    <property type="pathway name" value="Ub-specific processing proteases"/>
</dbReference>
<dbReference type="Reactome" id="R-DME-8856825">
    <property type="pathway name" value="Cargo recognition for clathrin-mediated endocytosis"/>
</dbReference>
<dbReference type="Reactome" id="R-DME-8856828">
    <property type="pathway name" value="Clathrin-mediated endocytosis"/>
</dbReference>
<dbReference type="BioGRID-ORCS" id="42652">
    <property type="hits" value="0 hits in 3 CRISPR screens"/>
</dbReference>
<dbReference type="GenomeRNAi" id="42652"/>
<dbReference type="PRO" id="PR:Q9VCZ3"/>
<dbReference type="Proteomes" id="UP000000803">
    <property type="component" value="Chromosome 3R"/>
</dbReference>
<dbReference type="Bgee" id="FBgn0038980">
    <property type="expression patterns" value="Expressed in lamina monopolar neuron L5 (Drosophila) in insect head and 149 other cell types or tissues"/>
</dbReference>
<dbReference type="ExpressionAtlas" id="Q9VCZ3">
    <property type="expression patterns" value="baseline and differential"/>
</dbReference>
<dbReference type="GO" id="GO:0016020">
    <property type="term" value="C:membrane"/>
    <property type="evidence" value="ECO:0000303"/>
    <property type="project" value="UniProtKB"/>
</dbReference>
<dbReference type="GO" id="GO:0005886">
    <property type="term" value="C:plasma membrane"/>
    <property type="evidence" value="ECO:0000314"/>
    <property type="project" value="FlyBase"/>
</dbReference>
<dbReference type="GO" id="GO:0004935">
    <property type="term" value="F:adrenergic receptor activity"/>
    <property type="evidence" value="ECO:0007669"/>
    <property type="project" value="InterPro"/>
</dbReference>
<dbReference type="GO" id="GO:0004989">
    <property type="term" value="F:octopamine receptor activity"/>
    <property type="evidence" value="ECO:0000314"/>
    <property type="project" value="UniProtKB"/>
</dbReference>
<dbReference type="GO" id="GO:0071880">
    <property type="term" value="P:adenylate cyclase-activating adrenergic receptor signaling pathway"/>
    <property type="evidence" value="ECO:0000318"/>
    <property type="project" value="GO_Central"/>
</dbReference>
<dbReference type="GO" id="GO:0007189">
    <property type="term" value="P:adenylate cyclase-activating G protein-coupled receptor signaling pathway"/>
    <property type="evidence" value="ECO:0000314"/>
    <property type="project" value="UniProtKB"/>
</dbReference>
<dbReference type="GO" id="GO:0007188">
    <property type="term" value="P:adenylate cyclase-modulating G protein-coupled receptor signaling pathway"/>
    <property type="evidence" value="ECO:0000314"/>
    <property type="project" value="FlyBase"/>
</dbReference>
<dbReference type="GO" id="GO:0045886">
    <property type="term" value="P:negative regulation of synaptic assembly at neuromuscular junction"/>
    <property type="evidence" value="ECO:0000315"/>
    <property type="project" value="FlyBase"/>
</dbReference>
<dbReference type="GO" id="GO:0043410">
    <property type="term" value="P:positive regulation of MAPK cascade"/>
    <property type="evidence" value="ECO:0000318"/>
    <property type="project" value="GO_Central"/>
</dbReference>
<dbReference type="CDD" id="cd15066">
    <property type="entry name" value="7tmA_DmOct-betaAR-like"/>
    <property type="match status" value="1"/>
</dbReference>
<dbReference type="FunFam" id="1.20.1070.10:FF:000685">
    <property type="entry name" value="Octopamine receptor beta-1R"/>
    <property type="match status" value="1"/>
</dbReference>
<dbReference type="Gene3D" id="1.20.1070.10">
    <property type="entry name" value="Rhodopsin 7-helix transmembrane proteins"/>
    <property type="match status" value="1"/>
</dbReference>
<dbReference type="InterPro" id="IPR002233">
    <property type="entry name" value="ADR_fam"/>
</dbReference>
<dbReference type="InterPro" id="IPR000276">
    <property type="entry name" value="GPCR_Rhodpsn"/>
</dbReference>
<dbReference type="InterPro" id="IPR017452">
    <property type="entry name" value="GPCR_Rhodpsn_7TM"/>
</dbReference>
<dbReference type="PANTHER" id="PTHR24248">
    <property type="entry name" value="ADRENERGIC RECEPTOR-RELATED G-PROTEIN COUPLED RECEPTOR"/>
    <property type="match status" value="1"/>
</dbReference>
<dbReference type="PANTHER" id="PTHR24248:SF134">
    <property type="entry name" value="OCTOPAMINE RECEPTOR BETA-1R"/>
    <property type="match status" value="1"/>
</dbReference>
<dbReference type="Pfam" id="PF00001">
    <property type="entry name" value="7tm_1"/>
    <property type="match status" value="1"/>
</dbReference>
<dbReference type="PRINTS" id="PR01103">
    <property type="entry name" value="ADRENERGICR"/>
</dbReference>
<dbReference type="PRINTS" id="PR00237">
    <property type="entry name" value="GPCRRHODOPSN"/>
</dbReference>
<dbReference type="SMART" id="SM01381">
    <property type="entry name" value="7TM_GPCR_Srsx"/>
    <property type="match status" value="1"/>
</dbReference>
<dbReference type="SUPFAM" id="SSF81321">
    <property type="entry name" value="Family A G protein-coupled receptor-like"/>
    <property type="match status" value="1"/>
</dbReference>
<dbReference type="PROSITE" id="PS00237">
    <property type="entry name" value="G_PROTEIN_RECEP_F1_1"/>
    <property type="match status" value="1"/>
</dbReference>
<dbReference type="PROSITE" id="PS50262">
    <property type="entry name" value="G_PROTEIN_RECEP_F1_2"/>
    <property type="match status" value="1"/>
</dbReference>
<keyword id="KW-0025">Alternative splicing</keyword>
<keyword id="KW-1003">Cell membrane</keyword>
<keyword id="KW-0297">G-protein coupled receptor</keyword>
<keyword id="KW-0325">Glycoprotein</keyword>
<keyword id="KW-0472">Membrane</keyword>
<keyword id="KW-0675">Receptor</keyword>
<keyword id="KW-1185">Reference proteome</keyword>
<keyword id="KW-0807">Transducer</keyword>
<keyword id="KW-0812">Transmembrane</keyword>
<keyword id="KW-1133">Transmembrane helix</keyword>
<evidence type="ECO:0000255" key="1"/>
<evidence type="ECO:0000255" key="2">
    <source>
        <dbReference type="PROSITE-ProRule" id="PRU00521"/>
    </source>
</evidence>
<evidence type="ECO:0000256" key="3">
    <source>
        <dbReference type="SAM" id="MobiDB-lite"/>
    </source>
</evidence>
<evidence type="ECO:0000269" key="4">
    <source>
    </source>
</evidence>
<evidence type="ECO:0000269" key="5">
    <source>
    </source>
</evidence>
<evidence type="ECO:0000269" key="6">
    <source>
    </source>
</evidence>
<evidence type="ECO:0000269" key="7">
    <source>
    </source>
</evidence>
<evidence type="ECO:0000269" key="8">
    <source>
    </source>
</evidence>
<evidence type="ECO:0000303" key="9">
    <source>
    </source>
</evidence>
<evidence type="ECO:0000305" key="10"/>
<evidence type="ECO:0000312" key="11">
    <source>
        <dbReference type="EMBL" id="AAF56012.1"/>
    </source>
</evidence>
<evidence type="ECO:0000312" key="12">
    <source>
        <dbReference type="EMBL" id="CAE84925.1"/>
    </source>
</evidence>
<evidence type="ECO:0000312" key="13">
    <source>
        <dbReference type="EMBL" id="CAI56428.1"/>
    </source>
</evidence>
<evidence type="ECO:0000312" key="14">
    <source>
        <dbReference type="FlyBase" id="FBgn0038980"/>
    </source>
</evidence>
<protein>
    <recommendedName>
        <fullName>Octopamine receptor beta-1R</fullName>
        <shortName>DmOA2</shortName>
        <shortName>DmOct-beta-1R</shortName>
    </recommendedName>
</protein>